<dbReference type="EMBL" id="CP000776">
    <property type="protein sequence ID" value="ABS51951.1"/>
    <property type="molecule type" value="Genomic_DNA"/>
</dbReference>
<dbReference type="RefSeq" id="WP_011991561.1">
    <property type="nucleotide sequence ID" value="NC_009714.1"/>
</dbReference>
<dbReference type="SMR" id="A7HZM3"/>
<dbReference type="STRING" id="360107.CHAB381_0101"/>
<dbReference type="KEGG" id="cha:CHAB381_0101"/>
<dbReference type="eggNOG" id="COG0098">
    <property type="taxonomic scope" value="Bacteria"/>
</dbReference>
<dbReference type="HOGENOM" id="CLU_065898_2_2_7"/>
<dbReference type="OrthoDB" id="9809045at2"/>
<dbReference type="Proteomes" id="UP000002407">
    <property type="component" value="Chromosome"/>
</dbReference>
<dbReference type="GO" id="GO:0015935">
    <property type="term" value="C:small ribosomal subunit"/>
    <property type="evidence" value="ECO:0007669"/>
    <property type="project" value="InterPro"/>
</dbReference>
<dbReference type="GO" id="GO:0019843">
    <property type="term" value="F:rRNA binding"/>
    <property type="evidence" value="ECO:0007669"/>
    <property type="project" value="UniProtKB-UniRule"/>
</dbReference>
<dbReference type="GO" id="GO:0003735">
    <property type="term" value="F:structural constituent of ribosome"/>
    <property type="evidence" value="ECO:0007669"/>
    <property type="project" value="InterPro"/>
</dbReference>
<dbReference type="GO" id="GO:0006412">
    <property type="term" value="P:translation"/>
    <property type="evidence" value="ECO:0007669"/>
    <property type="project" value="UniProtKB-UniRule"/>
</dbReference>
<dbReference type="FunFam" id="3.30.160.20:FF:000001">
    <property type="entry name" value="30S ribosomal protein S5"/>
    <property type="match status" value="1"/>
</dbReference>
<dbReference type="FunFam" id="3.30.230.10:FF:000002">
    <property type="entry name" value="30S ribosomal protein S5"/>
    <property type="match status" value="1"/>
</dbReference>
<dbReference type="Gene3D" id="3.30.160.20">
    <property type="match status" value="1"/>
</dbReference>
<dbReference type="Gene3D" id="3.30.230.10">
    <property type="match status" value="1"/>
</dbReference>
<dbReference type="HAMAP" id="MF_01307_B">
    <property type="entry name" value="Ribosomal_uS5_B"/>
    <property type="match status" value="1"/>
</dbReference>
<dbReference type="InterPro" id="IPR020568">
    <property type="entry name" value="Ribosomal_Su5_D2-typ_SF"/>
</dbReference>
<dbReference type="InterPro" id="IPR000851">
    <property type="entry name" value="Ribosomal_uS5"/>
</dbReference>
<dbReference type="InterPro" id="IPR005712">
    <property type="entry name" value="Ribosomal_uS5_bac-type"/>
</dbReference>
<dbReference type="InterPro" id="IPR005324">
    <property type="entry name" value="Ribosomal_uS5_C"/>
</dbReference>
<dbReference type="InterPro" id="IPR013810">
    <property type="entry name" value="Ribosomal_uS5_N"/>
</dbReference>
<dbReference type="InterPro" id="IPR018192">
    <property type="entry name" value="Ribosomal_uS5_N_CS"/>
</dbReference>
<dbReference type="InterPro" id="IPR014721">
    <property type="entry name" value="Ribsml_uS5_D2-typ_fold_subgr"/>
</dbReference>
<dbReference type="NCBIfam" id="TIGR01021">
    <property type="entry name" value="rpsE_bact"/>
    <property type="match status" value="1"/>
</dbReference>
<dbReference type="PANTHER" id="PTHR48277">
    <property type="entry name" value="MITOCHONDRIAL RIBOSOMAL PROTEIN S5"/>
    <property type="match status" value="1"/>
</dbReference>
<dbReference type="PANTHER" id="PTHR48277:SF1">
    <property type="entry name" value="MITOCHONDRIAL RIBOSOMAL PROTEIN S5"/>
    <property type="match status" value="1"/>
</dbReference>
<dbReference type="Pfam" id="PF00333">
    <property type="entry name" value="Ribosomal_S5"/>
    <property type="match status" value="1"/>
</dbReference>
<dbReference type="Pfam" id="PF03719">
    <property type="entry name" value="Ribosomal_S5_C"/>
    <property type="match status" value="1"/>
</dbReference>
<dbReference type="SUPFAM" id="SSF54768">
    <property type="entry name" value="dsRNA-binding domain-like"/>
    <property type="match status" value="1"/>
</dbReference>
<dbReference type="SUPFAM" id="SSF54211">
    <property type="entry name" value="Ribosomal protein S5 domain 2-like"/>
    <property type="match status" value="1"/>
</dbReference>
<dbReference type="PROSITE" id="PS00585">
    <property type="entry name" value="RIBOSOMAL_S5"/>
    <property type="match status" value="1"/>
</dbReference>
<dbReference type="PROSITE" id="PS50881">
    <property type="entry name" value="S5_DSRBD"/>
    <property type="match status" value="1"/>
</dbReference>
<keyword id="KW-1185">Reference proteome</keyword>
<keyword id="KW-0687">Ribonucleoprotein</keyword>
<keyword id="KW-0689">Ribosomal protein</keyword>
<keyword id="KW-0694">RNA-binding</keyword>
<keyword id="KW-0699">rRNA-binding</keyword>
<organism>
    <name type="scientific">Campylobacter hominis (strain ATCC BAA-381 / DSM 21671 / CCUG 45161 / LMG 19568 / NCTC 13146 / CH001A)</name>
    <dbReference type="NCBI Taxonomy" id="360107"/>
    <lineage>
        <taxon>Bacteria</taxon>
        <taxon>Pseudomonadati</taxon>
        <taxon>Campylobacterota</taxon>
        <taxon>Epsilonproteobacteria</taxon>
        <taxon>Campylobacterales</taxon>
        <taxon>Campylobacteraceae</taxon>
        <taxon>Campylobacter</taxon>
    </lineage>
</organism>
<sequence length="146" mass="15729">MKYNREEFEEVIVNIGRVTKVVKGGRKFRFTALVVVGNRKGLVGYGFGKSKEVPDAIKKAVDDAFKNIIDVKLNGSTIAHDIEVKYNASKILLKPASEGTGVIAGGSVRPVLELVGIKDILTKSLGSNNSSNVVRATIKALSMLKN</sequence>
<evidence type="ECO:0000255" key="1">
    <source>
        <dbReference type="HAMAP-Rule" id="MF_01307"/>
    </source>
</evidence>
<evidence type="ECO:0000305" key="2"/>
<feature type="chain" id="PRO_0000323099" description="Small ribosomal subunit protein uS5">
    <location>
        <begin position="1"/>
        <end position="146"/>
    </location>
</feature>
<feature type="domain" description="S5 DRBM" evidence="1">
    <location>
        <begin position="8"/>
        <end position="71"/>
    </location>
</feature>
<name>RS5_CAMHC</name>
<comment type="function">
    <text evidence="1">With S4 and S12 plays an important role in translational accuracy.</text>
</comment>
<comment type="function">
    <text evidence="1">Located at the back of the 30S subunit body where it stabilizes the conformation of the head with respect to the body.</text>
</comment>
<comment type="subunit">
    <text evidence="1">Part of the 30S ribosomal subunit. Contacts proteins S4 and S8.</text>
</comment>
<comment type="domain">
    <text>The N-terminal domain interacts with the head of the 30S subunit; the C-terminal domain interacts with the body and contacts protein S4. The interaction surface between S4 and S5 is involved in control of translational fidelity.</text>
</comment>
<comment type="similarity">
    <text evidence="1">Belongs to the universal ribosomal protein uS5 family.</text>
</comment>
<protein>
    <recommendedName>
        <fullName evidence="1">Small ribosomal subunit protein uS5</fullName>
    </recommendedName>
    <alternativeName>
        <fullName evidence="2">30S ribosomal protein S5</fullName>
    </alternativeName>
</protein>
<gene>
    <name evidence="1" type="primary">rpsE</name>
    <name type="ordered locus">CHAB381_0101</name>
</gene>
<reference key="1">
    <citation type="submission" date="2007-07" db="EMBL/GenBank/DDBJ databases">
        <title>Complete genome sequence of Campylobacter hominis ATCC BAA-381, a commensal isolated from the human gastrointestinal tract.</title>
        <authorList>
            <person name="Fouts D.E."/>
            <person name="Mongodin E.F."/>
            <person name="Puiu D."/>
            <person name="Sebastian Y."/>
            <person name="Miller W.G."/>
            <person name="Mandrell R.E."/>
            <person name="Nelson K.E."/>
        </authorList>
    </citation>
    <scope>NUCLEOTIDE SEQUENCE [LARGE SCALE GENOMIC DNA]</scope>
    <source>
        <strain>ATCC BAA-381 / DSM 21671 / CCUG 45161 / LMG 19568 / NCTC 13146 / CH001A</strain>
    </source>
</reference>
<accession>A7HZM3</accession>
<proteinExistence type="inferred from homology"/>